<accession>A6W0E1</accession>
<feature type="chain" id="PRO_0000349693" description="tRNA-specific 2-thiouridylase MnmA">
    <location>
        <begin position="1"/>
        <end position="390"/>
    </location>
</feature>
<feature type="region of interest" description="Interaction with target base in tRNA" evidence="1">
    <location>
        <begin position="122"/>
        <end position="124"/>
    </location>
</feature>
<feature type="region of interest" description="Interaction with tRNA" evidence="1">
    <location>
        <begin position="173"/>
        <end position="175"/>
    </location>
</feature>
<feature type="region of interest" description="Interaction with tRNA" evidence="1">
    <location>
        <begin position="335"/>
        <end position="336"/>
    </location>
</feature>
<feature type="active site" description="Nucleophile" evidence="1">
    <location>
        <position position="127"/>
    </location>
</feature>
<feature type="active site" description="Cysteine persulfide intermediate" evidence="1">
    <location>
        <position position="223"/>
    </location>
</feature>
<feature type="binding site" evidence="1">
    <location>
        <begin position="36"/>
        <end position="43"/>
    </location>
    <ligand>
        <name>ATP</name>
        <dbReference type="ChEBI" id="CHEBI:30616"/>
    </ligand>
</feature>
<feature type="binding site" evidence="1">
    <location>
        <position position="62"/>
    </location>
    <ligand>
        <name>ATP</name>
        <dbReference type="ChEBI" id="CHEBI:30616"/>
    </ligand>
</feature>
<feature type="binding site" evidence="1">
    <location>
        <position position="151"/>
    </location>
    <ligand>
        <name>ATP</name>
        <dbReference type="ChEBI" id="CHEBI:30616"/>
    </ligand>
</feature>
<feature type="site" description="Interaction with tRNA" evidence="1">
    <location>
        <position position="152"/>
    </location>
</feature>
<feature type="site" description="Interaction with tRNA" evidence="1">
    <location>
        <position position="368"/>
    </location>
</feature>
<feature type="disulfide bond" description="Alternate" evidence="1">
    <location>
        <begin position="127"/>
        <end position="223"/>
    </location>
</feature>
<sequence length="390" mass="43941">MPLRFTKLTVEKKQVMKESHYLTAQPANHDKKVIVGMSGGVDSSVSALILMQQGYQVEGLFMKNWDEDDGTEYCTAKDDLADAQAVSDKLGIKLHTANFASEYWDNVFEHFLAEYKAGRTPNPDILCNKEIKFKAFLEYAMALNADYIATGHYVRRGEKNGEPLLLKGLDGNKDQSYFLYAVGKDEIAKTLFPVGELEKTEVRRLAEEFGLITHNKKDSTGICFIGERRFKDFLEQYLPAQPGDIETLEGDKIARHHGLMYHTIGQRQGLGIGGLAKYSDDPWYVVEKDLERNVLIVTQGGQHESLFKTHLIADNFDWVAREKPTFPLTCKAKCRYRQSDQECTINELADGRVEVSFVEPQRAVTPGQSVVFYVDDVCLGGGIINVAFNK</sequence>
<comment type="function">
    <text evidence="1">Catalyzes the 2-thiolation of uridine at the wobble position (U34) of tRNA, leading to the formation of s(2)U34.</text>
</comment>
<comment type="catalytic activity">
    <reaction evidence="1">
        <text>S-sulfanyl-L-cysteinyl-[protein] + uridine(34) in tRNA + AH2 + ATP = 2-thiouridine(34) in tRNA + L-cysteinyl-[protein] + A + AMP + diphosphate + H(+)</text>
        <dbReference type="Rhea" id="RHEA:47032"/>
        <dbReference type="Rhea" id="RHEA-COMP:10131"/>
        <dbReference type="Rhea" id="RHEA-COMP:11726"/>
        <dbReference type="Rhea" id="RHEA-COMP:11727"/>
        <dbReference type="Rhea" id="RHEA-COMP:11728"/>
        <dbReference type="ChEBI" id="CHEBI:13193"/>
        <dbReference type="ChEBI" id="CHEBI:15378"/>
        <dbReference type="ChEBI" id="CHEBI:17499"/>
        <dbReference type="ChEBI" id="CHEBI:29950"/>
        <dbReference type="ChEBI" id="CHEBI:30616"/>
        <dbReference type="ChEBI" id="CHEBI:33019"/>
        <dbReference type="ChEBI" id="CHEBI:61963"/>
        <dbReference type="ChEBI" id="CHEBI:65315"/>
        <dbReference type="ChEBI" id="CHEBI:87170"/>
        <dbReference type="ChEBI" id="CHEBI:456215"/>
        <dbReference type="EC" id="2.8.1.13"/>
    </reaction>
</comment>
<comment type="subcellular location">
    <subcellularLocation>
        <location evidence="1">Cytoplasm</location>
    </subcellularLocation>
</comment>
<comment type="similarity">
    <text evidence="1">Belongs to the MnmA/TRMU family.</text>
</comment>
<gene>
    <name evidence="1" type="primary">mnmA</name>
    <name type="ordered locus">Mmwyl1_3265</name>
</gene>
<keyword id="KW-0067">ATP-binding</keyword>
<keyword id="KW-0963">Cytoplasm</keyword>
<keyword id="KW-1015">Disulfide bond</keyword>
<keyword id="KW-0547">Nucleotide-binding</keyword>
<keyword id="KW-0694">RNA-binding</keyword>
<keyword id="KW-0808">Transferase</keyword>
<keyword id="KW-0819">tRNA processing</keyword>
<keyword id="KW-0820">tRNA-binding</keyword>
<protein>
    <recommendedName>
        <fullName evidence="1">tRNA-specific 2-thiouridylase MnmA</fullName>
        <ecNumber evidence="1">2.8.1.13</ecNumber>
    </recommendedName>
</protein>
<reference key="1">
    <citation type="submission" date="2007-06" db="EMBL/GenBank/DDBJ databases">
        <title>Complete sequence of Marinomonas sp. MWYL1.</title>
        <authorList>
            <consortium name="US DOE Joint Genome Institute"/>
            <person name="Copeland A."/>
            <person name="Lucas S."/>
            <person name="Lapidus A."/>
            <person name="Barry K."/>
            <person name="Glavina del Rio T."/>
            <person name="Dalin E."/>
            <person name="Tice H."/>
            <person name="Pitluck S."/>
            <person name="Kiss H."/>
            <person name="Brettin T."/>
            <person name="Bruce D."/>
            <person name="Detter J.C."/>
            <person name="Han C."/>
            <person name="Schmutz J."/>
            <person name="Larimer F."/>
            <person name="Land M."/>
            <person name="Hauser L."/>
            <person name="Kyrpides N."/>
            <person name="Kim E."/>
            <person name="Johnston A.W.B."/>
            <person name="Todd J.D."/>
            <person name="Rogers R."/>
            <person name="Wexler M."/>
            <person name="Bond P.L."/>
            <person name="Li Y."/>
            <person name="Richardson P."/>
        </authorList>
    </citation>
    <scope>NUCLEOTIDE SEQUENCE [LARGE SCALE GENOMIC DNA]</scope>
    <source>
        <strain>MWYL1</strain>
    </source>
</reference>
<proteinExistence type="inferred from homology"/>
<name>MNMA_MARMS</name>
<evidence type="ECO:0000255" key="1">
    <source>
        <dbReference type="HAMAP-Rule" id="MF_00144"/>
    </source>
</evidence>
<organism>
    <name type="scientific">Marinomonas sp. (strain MWYL1)</name>
    <dbReference type="NCBI Taxonomy" id="400668"/>
    <lineage>
        <taxon>Bacteria</taxon>
        <taxon>Pseudomonadati</taxon>
        <taxon>Pseudomonadota</taxon>
        <taxon>Gammaproteobacteria</taxon>
        <taxon>Oceanospirillales</taxon>
        <taxon>Oceanospirillaceae</taxon>
        <taxon>Marinomonas</taxon>
    </lineage>
</organism>
<dbReference type="EC" id="2.8.1.13" evidence="1"/>
<dbReference type="EMBL" id="CP000749">
    <property type="protein sequence ID" value="ABR72170.1"/>
    <property type="molecule type" value="Genomic_DNA"/>
</dbReference>
<dbReference type="SMR" id="A6W0E1"/>
<dbReference type="STRING" id="400668.Mmwyl1_3265"/>
<dbReference type="KEGG" id="mmw:Mmwyl1_3265"/>
<dbReference type="eggNOG" id="COG0482">
    <property type="taxonomic scope" value="Bacteria"/>
</dbReference>
<dbReference type="HOGENOM" id="CLU_035188_1_0_6"/>
<dbReference type="GO" id="GO:0005737">
    <property type="term" value="C:cytoplasm"/>
    <property type="evidence" value="ECO:0007669"/>
    <property type="project" value="UniProtKB-SubCell"/>
</dbReference>
<dbReference type="GO" id="GO:0005524">
    <property type="term" value="F:ATP binding"/>
    <property type="evidence" value="ECO:0007669"/>
    <property type="project" value="UniProtKB-KW"/>
</dbReference>
<dbReference type="GO" id="GO:0000049">
    <property type="term" value="F:tRNA binding"/>
    <property type="evidence" value="ECO:0007669"/>
    <property type="project" value="UniProtKB-KW"/>
</dbReference>
<dbReference type="GO" id="GO:0103016">
    <property type="term" value="F:tRNA-uridine 2-sulfurtransferase activity"/>
    <property type="evidence" value="ECO:0007669"/>
    <property type="project" value="UniProtKB-EC"/>
</dbReference>
<dbReference type="GO" id="GO:0002143">
    <property type="term" value="P:tRNA wobble position uridine thiolation"/>
    <property type="evidence" value="ECO:0007669"/>
    <property type="project" value="TreeGrafter"/>
</dbReference>
<dbReference type="CDD" id="cd01998">
    <property type="entry name" value="MnmA_TRMU-like"/>
    <property type="match status" value="1"/>
</dbReference>
<dbReference type="FunFam" id="2.30.30.280:FF:000001">
    <property type="entry name" value="tRNA-specific 2-thiouridylase MnmA"/>
    <property type="match status" value="1"/>
</dbReference>
<dbReference type="FunFam" id="2.40.30.10:FF:000023">
    <property type="entry name" value="tRNA-specific 2-thiouridylase MnmA"/>
    <property type="match status" value="1"/>
</dbReference>
<dbReference type="FunFam" id="3.40.50.620:FF:000004">
    <property type="entry name" value="tRNA-specific 2-thiouridylase MnmA"/>
    <property type="match status" value="1"/>
</dbReference>
<dbReference type="Gene3D" id="2.30.30.280">
    <property type="entry name" value="Adenine nucleotide alpha hydrolases-like domains"/>
    <property type="match status" value="1"/>
</dbReference>
<dbReference type="Gene3D" id="3.40.50.620">
    <property type="entry name" value="HUPs"/>
    <property type="match status" value="1"/>
</dbReference>
<dbReference type="Gene3D" id="2.40.30.10">
    <property type="entry name" value="Translation factors"/>
    <property type="match status" value="1"/>
</dbReference>
<dbReference type="HAMAP" id="MF_00144">
    <property type="entry name" value="tRNA_thiouridyl_MnmA"/>
    <property type="match status" value="1"/>
</dbReference>
<dbReference type="InterPro" id="IPR004506">
    <property type="entry name" value="MnmA-like"/>
</dbReference>
<dbReference type="InterPro" id="IPR046885">
    <property type="entry name" value="MnmA-like_C"/>
</dbReference>
<dbReference type="InterPro" id="IPR046884">
    <property type="entry name" value="MnmA-like_central"/>
</dbReference>
<dbReference type="InterPro" id="IPR023382">
    <property type="entry name" value="MnmA-like_central_sf"/>
</dbReference>
<dbReference type="InterPro" id="IPR014729">
    <property type="entry name" value="Rossmann-like_a/b/a_fold"/>
</dbReference>
<dbReference type="NCBIfam" id="NF001138">
    <property type="entry name" value="PRK00143.1"/>
    <property type="match status" value="1"/>
</dbReference>
<dbReference type="NCBIfam" id="TIGR00420">
    <property type="entry name" value="trmU"/>
    <property type="match status" value="1"/>
</dbReference>
<dbReference type="PANTHER" id="PTHR11933:SF5">
    <property type="entry name" value="MITOCHONDRIAL TRNA-SPECIFIC 2-THIOURIDYLASE 1"/>
    <property type="match status" value="1"/>
</dbReference>
<dbReference type="PANTHER" id="PTHR11933">
    <property type="entry name" value="TRNA 5-METHYLAMINOMETHYL-2-THIOURIDYLATE -METHYLTRANSFERASE"/>
    <property type="match status" value="1"/>
</dbReference>
<dbReference type="Pfam" id="PF03054">
    <property type="entry name" value="tRNA_Me_trans"/>
    <property type="match status" value="1"/>
</dbReference>
<dbReference type="Pfam" id="PF20258">
    <property type="entry name" value="tRNA_Me_trans_C"/>
    <property type="match status" value="1"/>
</dbReference>
<dbReference type="Pfam" id="PF20259">
    <property type="entry name" value="tRNA_Me_trans_M"/>
    <property type="match status" value="1"/>
</dbReference>
<dbReference type="SUPFAM" id="SSF52402">
    <property type="entry name" value="Adenine nucleotide alpha hydrolases-like"/>
    <property type="match status" value="1"/>
</dbReference>